<proteinExistence type="evidence at protein level"/>
<comment type="function">
    <text evidence="4 6 12 13 15">Neurotrophic factor that enhances survival and morphological differentiation of dopaminergic neurons and increases their high-affinity dopamine uptake (PubMed:8493557). Acts by binding to its coreceptor, GFRA1, leading to autophosphorylation and activation of the RET receptor (PubMed:10829012, PubMed:25242331, PubMed:31535977). Involved in the development of the neural crest (PubMed:15242795).</text>
</comment>
<comment type="subunit">
    <text evidence="7 8 9 11 12 13 15 19">Homodimer; disulfide-linked (PubMed:19478429, PubMed:25242331, PubMed:31535977, PubMed:8493557, PubMed:8988018). Interacts with GFRA1 coreceptor and RET: forms a 2:2:2 ternary complex composed of GDNF ligand, GFRA1 and RET receptor (PubMed:21994944, PubMed:25242331, PubMed:31535977). Interacts (via propeptide) with SORL1 (via N-terminal ectodomain); this interaction affects GDNF-regulated, but not constitutive secretion (PubMed:15364913, PubMed:21994944, PubMed:23333276). Also interacts with SORL1 in complex with GFRA1; this interaction leads to GDNF endocytosis and lysosomal degradation (PubMed:23333276).</text>
</comment>
<comment type="interaction">
    <interactant intactId="EBI-10207709">
        <id>P39905</id>
    </interactant>
    <interactant intactId="EBI-741181">
        <id>Q6RW13</id>
        <label>AGTRAP</label>
    </interactant>
    <organismsDiffer>false</organismsDiffer>
    <experiments>3</experiments>
</comment>
<comment type="interaction">
    <interactant intactId="EBI-12702062">
        <id>P39905-3</id>
    </interactant>
    <interactant intactId="EBI-17263240">
        <id>P15941-11</id>
        <label>MUC1</label>
    </interactant>
    <organismsDiffer>false</organismsDiffer>
    <experiments>3</experiments>
</comment>
<comment type="interaction">
    <interactant intactId="EBI-12702062">
        <id>P39905-3</id>
    </interactant>
    <interactant intactId="EBI-2695784">
        <id>Q8TAC9</id>
        <label>SCAMP5</label>
    </interactant>
    <organismsDiffer>false</organismsDiffer>
    <experiments>3</experiments>
</comment>
<comment type="interaction">
    <interactant intactId="EBI-12702062">
        <id>P39905-3</id>
    </interactant>
    <interactant intactId="EBI-9071725">
        <id>P08247</id>
        <label>SYP</label>
    </interactant>
    <organismsDiffer>false</organismsDiffer>
    <experiments>3</experiments>
</comment>
<comment type="interaction">
    <interactant intactId="EBI-25397146">
        <id>PRO_0000034005</id>
    </interactant>
    <interactant intactId="EBI-1171329">
        <id>Q92673</id>
        <label>SORL1</label>
    </interactant>
    <organismsDiffer>false</organismsDiffer>
    <experiments>6</experiments>
</comment>
<comment type="subcellular location">
    <subcellularLocation>
        <location evidence="9 22">Secreted</location>
    </subcellularLocation>
</comment>
<comment type="alternative products">
    <event type="alternative splicing"/>
    <isoform>
        <id>P39905-1</id>
        <name>1</name>
        <name>Ex1_4L</name>
        <sequence type="displayed"/>
    </isoform>
    <isoform>
        <id>P39905-2</id>
        <name>2</name>
        <name>ATF-1</name>
        <name>Ex1_4S</name>
        <name>Ex3_4S</name>
        <name evidence="23">GDNF delta 78</name>
        <name>HFK2-GDNF</name>
        <sequence type="described" ref="VSP_006420"/>
    </isoform>
    <isoform>
        <id>P39905-3</id>
        <name>3</name>
        <name>Ex2_4L</name>
        <name>HFK3-GDNF</name>
        <sequence type="described" ref="VSP_026368"/>
    </isoform>
    <isoform>
        <id>P39905-4</id>
        <name>4</name>
        <name>HFK4-GDNF</name>
        <sequence type="described" ref="VSP_026368 VSP_006420"/>
    </isoform>
    <isoform>
        <id>P39905-5</id>
        <name>5</name>
        <name>Ex4S_5</name>
        <sequence type="described" ref="VSP_042298"/>
    </isoform>
</comment>
<comment type="tissue specificity">
    <text evidence="10 14">In the brain, predominantly expressed in the striatum with highest levels in the caudate and lowest in the putamen. Isoform 2 is absent from most tissues except for low levels in intestine and kidney. Highest expression of isoform 3 is found in pancreatic islets. Isoform 5 is expressed at very low levels in putamen, nucleus accumbens, prefrontal cortex, amygdala, hypothalamus and intestine. Isoform 3 is up-regulated in the middle temporal gyrus of Alzheimer disease patients while isoform 2 shows no change.</text>
</comment>
<comment type="induction">
    <text evidence="22">By cAMP, 12-O-tetradecanoylphorbol-13-acetate (TPA) and FGF2.</text>
</comment>
<comment type="disease" evidence="5 16 17 18">
    <disease id="DI-01745">
        <name>Hirschsprung disease 3</name>
        <acronym>HSCR3</acronym>
        <description>A disorder of neural crest development characterized by absence of enteric ganglia along a variable length of the intestine. It is the most common cause of congenital intestinal obstruction. Early symptoms range from complete acute neonatal obstruction, characterized by vomiting, abdominal distention and failure to pass stool, to chronic constipation in the older child.</description>
        <dbReference type="MIM" id="613711"/>
    </disease>
    <text>Disease susceptibility is associated with variants affecting the gene represented in this entry.</text>
</comment>
<comment type="disease" evidence="20">
    <disease id="DI-02160">
        <name>Pheochromocytoma</name>
        <acronym>PCC</acronym>
        <description>A catecholamine-producing tumor of chromaffin tissue of the adrenal medulla or sympathetic paraganglia. The cardinal symptom, reflecting the increased secretion of epinephrine and norepinephrine, is hypertension, which may be persistent or intermittent.</description>
        <dbReference type="MIM" id="171300"/>
    </disease>
    <text>The gene represented in this entry may act as a disease modifier.</text>
</comment>
<comment type="similarity">
    <text evidence="27">Belongs to the TGF-beta family. GDNF subfamily.</text>
</comment>
<protein>
    <recommendedName>
        <fullName>Glial cell line-derived neurotrophic factor</fullName>
        <shortName>hGDNF</shortName>
    </recommendedName>
    <alternativeName>
        <fullName>Astrocyte-derived trophic factor</fullName>
        <shortName>ATF</shortName>
    </alternativeName>
</protein>
<feature type="signal peptide" evidence="2">
    <location>
        <begin position="1"/>
        <end position="19"/>
    </location>
</feature>
<feature type="propeptide" id="PRO_0000034004" evidence="1">
    <location>
        <begin position="20"/>
        <end position="75"/>
    </location>
</feature>
<feature type="chain" id="PRO_0000034005" description="Glial cell line-derived neurotrophic factor">
    <location>
        <begin position="78"/>
        <end position="211"/>
    </location>
</feature>
<feature type="region of interest" description="Disordered" evidence="3">
    <location>
        <begin position="21"/>
        <end position="56"/>
    </location>
</feature>
<feature type="region of interest" description="Disordered" evidence="3">
    <location>
        <begin position="78"/>
        <end position="113"/>
    </location>
</feature>
<feature type="compositionally biased region" description="Basic and acidic residues" evidence="3">
    <location>
        <begin position="27"/>
        <end position="38"/>
    </location>
</feature>
<feature type="glycosylation site" description="N-linked (GlcNAc...) asparagine" evidence="8 12 28">
    <location>
        <position position="126"/>
    </location>
</feature>
<feature type="glycosylation site" description="N-linked (GlcNAc...) asparagine" evidence="2">
    <location>
        <position position="162"/>
    </location>
</feature>
<feature type="disulfide bond" evidence="13 19 29">
    <location>
        <begin position="118"/>
        <end position="179"/>
    </location>
</feature>
<feature type="disulfide bond" evidence="12 13 19 28 29">
    <location>
        <begin position="145"/>
        <end position="208"/>
    </location>
</feature>
<feature type="disulfide bond" evidence="12 13 19 28 29">
    <location>
        <begin position="149"/>
        <end position="210"/>
    </location>
</feature>
<feature type="disulfide bond" description="Interchain" evidence="12 13 19 28 29">
    <location>
        <position position="178"/>
    </location>
</feature>
<feature type="splice variant" id="VSP_042298" description="In isoform 5." evidence="27">
    <location>
        <begin position="1"/>
        <end position="52"/>
    </location>
</feature>
<feature type="splice variant" id="VSP_026368" description="In isoform 3 and isoform 4." evidence="26">
    <original>M</original>
    <variation>MQSLPNSNGAAAGRDFKM</variation>
    <location>
        <position position="1"/>
    </location>
</feature>
<feature type="splice variant" id="VSP_006420" description="In isoform 2 and isoform 4." evidence="24 25 26">
    <original>GKRPPEAPAEDRSLGRRRAPFALSSDS</original>
    <variation>A</variation>
    <location>
        <begin position="25"/>
        <end position="51"/>
    </location>
</feature>
<feature type="sequence variant" id="VAR_009494" description="In HSCR3; uncertain significance; dbSNP:rs777451569." evidence="17">
    <original>P</original>
    <variation>S</variation>
    <location>
        <position position="21"/>
    </location>
</feature>
<feature type="sequence variant" id="VAR_009495" description="May be a risk factor for Hirschsprung disease; dbSNP:rs36119840." evidence="16 20 21">
    <original>R</original>
    <variation>W</variation>
    <location>
        <position position="93"/>
    </location>
</feature>
<feature type="sequence variant" id="VAR_009496" description="Risk factor for Hirschsprung disease; dbSNP:rs76466003." evidence="17">
    <original>D</original>
    <variation>N</variation>
    <location>
        <position position="150"/>
    </location>
</feature>
<feature type="sequence variant" id="VAR_009497" description="In HSCR3; sporadic form; dbSNP:rs104893891." evidence="18">
    <original>T</original>
    <variation>S</variation>
    <location>
        <position position="154"/>
    </location>
</feature>
<feature type="sequence variant" id="VAR_018152" description="In HSCR3; dbSNP:rs121918536." evidence="5">
    <original>I</original>
    <variation>M</variation>
    <location>
        <position position="211"/>
    </location>
</feature>
<feature type="turn" evidence="30">
    <location>
        <begin position="114"/>
        <end position="117"/>
    </location>
</feature>
<feature type="strand" evidence="30">
    <location>
        <begin position="119"/>
        <end position="126"/>
    </location>
</feature>
<feature type="helix" evidence="30">
    <location>
        <begin position="127"/>
        <end position="130"/>
    </location>
</feature>
<feature type="strand" evidence="30">
    <location>
        <begin position="139"/>
        <end position="147"/>
    </location>
</feature>
<feature type="helix" evidence="30">
    <location>
        <begin position="155"/>
        <end position="165"/>
    </location>
</feature>
<feature type="strand" evidence="30">
    <location>
        <begin position="168"/>
        <end position="173"/>
    </location>
</feature>
<feature type="strand" evidence="30">
    <location>
        <begin position="178"/>
        <end position="184"/>
    </location>
</feature>
<feature type="strand" evidence="30">
    <location>
        <begin position="188"/>
        <end position="191"/>
    </location>
</feature>
<feature type="strand" evidence="30">
    <location>
        <begin position="197"/>
        <end position="200"/>
    </location>
</feature>
<feature type="strand" evidence="30">
    <location>
        <begin position="204"/>
        <end position="211"/>
    </location>
</feature>
<sequence length="211" mass="23720">MKLWDVVAVCLVLLHTASAFPLPAGKRPPEAPAEDRSLGRRRAPFALSSDSNMPEDYPDQFDDVMDFIQATIKRLKRSPDKQMAVLPRRERNRQAAAANPENSRGKGRRGQRGKNRGCVLTAIHLNVTDLGLGYETKEELIFRYCSGSCDAAETTYDKILKNLSRNRRLVSDKVGQACCRPIAFDDDLSFLDDNLVYHILRKHSAKRCGCI</sequence>
<dbReference type="EMBL" id="L19063">
    <property type="protein sequence ID" value="AAA67910.1"/>
    <property type="molecule type" value="Genomic_DNA"/>
</dbReference>
<dbReference type="EMBL" id="L19062">
    <property type="protein sequence ID" value="AAA67910.1"/>
    <property type="status" value="JOINED"/>
    <property type="molecule type" value="Genomic_DNA"/>
</dbReference>
<dbReference type="EMBL" id="AY052832">
    <property type="protein sequence ID" value="AAL11017.1"/>
    <property type="molecule type" value="mRNA"/>
</dbReference>
<dbReference type="EMBL" id="CR541923">
    <property type="protein sequence ID" value="CAG46721.1"/>
    <property type="molecule type" value="mRNA"/>
</dbReference>
<dbReference type="EMBL" id="AC008869">
    <property type="status" value="NOT_ANNOTATED_CDS"/>
    <property type="molecule type" value="Genomic_DNA"/>
</dbReference>
<dbReference type="EMBL" id="CH471119">
    <property type="protein sequence ID" value="EAW55963.1"/>
    <property type="molecule type" value="Genomic_DNA"/>
</dbReference>
<dbReference type="EMBL" id="BC069119">
    <property type="protein sequence ID" value="AAH69119.1"/>
    <property type="molecule type" value="mRNA"/>
</dbReference>
<dbReference type="EMBL" id="BC069369">
    <property type="protein sequence ID" value="AAH69369.1"/>
    <property type="molecule type" value="mRNA"/>
</dbReference>
<dbReference type="EMBL" id="BC128108">
    <property type="protein sequence ID" value="AAI28109.1"/>
    <property type="molecule type" value="mRNA"/>
</dbReference>
<dbReference type="EMBL" id="BC128109">
    <property type="protein sequence ID" value="AAI28110.1"/>
    <property type="molecule type" value="mRNA"/>
</dbReference>
<dbReference type="EMBL" id="AF053748">
    <property type="protein sequence ID" value="AAD43139.1"/>
    <property type="molecule type" value="mRNA"/>
</dbReference>
<dbReference type="EMBL" id="AJ001896">
    <property type="protein sequence ID" value="CAA05074.1"/>
    <property type="molecule type" value="Genomic_DNA"/>
</dbReference>
<dbReference type="EMBL" id="AJ001897">
    <property type="protein sequence ID" value="CAA05075.1"/>
    <property type="molecule type" value="mRNA"/>
</dbReference>
<dbReference type="EMBL" id="AJ001898">
    <property type="protein sequence ID" value="CAA05076.1"/>
    <property type="molecule type" value="mRNA"/>
</dbReference>
<dbReference type="EMBL" id="AJ001899">
    <property type="protein sequence ID" value="CAA05077.1"/>
    <property type="molecule type" value="mRNA"/>
</dbReference>
<dbReference type="EMBL" id="AJ001900">
    <property type="protein sequence ID" value="CAA05078.1"/>
    <property type="molecule type" value="mRNA"/>
</dbReference>
<dbReference type="EMBL" id="AF063586">
    <property type="protein sequence ID" value="AAC98782.1"/>
    <property type="molecule type" value="Genomic_DNA"/>
</dbReference>
<dbReference type="CCDS" id="CCDS3922.1">
    <molecule id="P39905-1"/>
</dbReference>
<dbReference type="CCDS" id="CCDS3923.1">
    <molecule id="P39905-2"/>
</dbReference>
<dbReference type="CCDS" id="CCDS54845.1">
    <molecule id="P39905-3"/>
</dbReference>
<dbReference type="CCDS" id="CCDS54846.1">
    <molecule id="P39905-4"/>
</dbReference>
<dbReference type="CCDS" id="CCDS75237.1">
    <molecule id="P39905-5"/>
</dbReference>
<dbReference type="PIR" id="B37499">
    <property type="entry name" value="B37499"/>
</dbReference>
<dbReference type="RefSeq" id="NP_000505.1">
    <molecule id="P39905-1"/>
    <property type="nucleotide sequence ID" value="NM_000514.4"/>
</dbReference>
<dbReference type="RefSeq" id="NP_001177397.1">
    <molecule id="P39905-3"/>
    <property type="nucleotide sequence ID" value="NM_001190468.1"/>
</dbReference>
<dbReference type="RefSeq" id="NP_001177398.1">
    <molecule id="P39905-4"/>
    <property type="nucleotide sequence ID" value="NM_001190469.1"/>
</dbReference>
<dbReference type="RefSeq" id="NP_001265027.1">
    <molecule id="P39905-5"/>
    <property type="nucleotide sequence ID" value="NM_001278098.1"/>
</dbReference>
<dbReference type="RefSeq" id="NP_954701.1">
    <molecule id="P39905-2"/>
    <property type="nucleotide sequence ID" value="NM_199231.2"/>
</dbReference>
<dbReference type="RefSeq" id="XP_011512332.1">
    <property type="nucleotide sequence ID" value="XM_011514030.2"/>
</dbReference>
<dbReference type="RefSeq" id="XP_016864826.1">
    <molecule id="P39905-2"/>
    <property type="nucleotide sequence ID" value="XM_017009337.3"/>
</dbReference>
<dbReference type="RefSeq" id="XP_054208339.1">
    <molecule id="P39905-2"/>
    <property type="nucleotide sequence ID" value="XM_054352364.1"/>
</dbReference>
<dbReference type="PDB" id="2V5E">
    <property type="method" value="X-ray"/>
    <property type="resolution" value="2.35 A"/>
    <property type="chains" value="B=111-211"/>
</dbReference>
<dbReference type="PDB" id="3FUB">
    <property type="method" value="X-ray"/>
    <property type="resolution" value="2.35 A"/>
    <property type="chains" value="B/D=78-211"/>
</dbReference>
<dbReference type="PDB" id="4UX8">
    <property type="method" value="EM"/>
    <property type="resolution" value="24.00 A"/>
    <property type="chains" value="D/F=78-211"/>
</dbReference>
<dbReference type="PDB" id="6Q2N">
    <property type="method" value="EM"/>
    <property type="resolution" value="4.40 A"/>
    <property type="chains" value="A/B=78-211"/>
</dbReference>
<dbReference type="PDBsum" id="2V5E"/>
<dbReference type="PDBsum" id="3FUB"/>
<dbReference type="PDBsum" id="4UX8"/>
<dbReference type="PDBsum" id="6Q2N"/>
<dbReference type="EMDB" id="EMD-20575"/>
<dbReference type="EMDB" id="EMD-2712"/>
<dbReference type="SMR" id="P39905"/>
<dbReference type="BioGRID" id="108936">
    <property type="interactions" value="35"/>
</dbReference>
<dbReference type="CORUM" id="P39905"/>
<dbReference type="DIP" id="DIP-59051N"/>
<dbReference type="FunCoup" id="P39905">
    <property type="interactions" value="743"/>
</dbReference>
<dbReference type="IntAct" id="P39905">
    <property type="interactions" value="13"/>
</dbReference>
<dbReference type="STRING" id="9606.ENSP00000409007"/>
<dbReference type="DrugBank" id="DB09301">
    <property type="generic name" value="Chondroitin sulfate"/>
</dbReference>
<dbReference type="GlyCosmos" id="P39905">
    <property type="glycosylation" value="2 sites, No reported glycans"/>
</dbReference>
<dbReference type="GlyGen" id="P39905">
    <property type="glycosylation" value="2 sites"/>
</dbReference>
<dbReference type="iPTMnet" id="P39905"/>
<dbReference type="PhosphoSitePlus" id="P39905"/>
<dbReference type="BioMuta" id="GDNF"/>
<dbReference type="DMDM" id="729567"/>
<dbReference type="jPOST" id="P39905"/>
<dbReference type="MassIVE" id="P39905"/>
<dbReference type="PaxDb" id="9606-ENSP00000409007"/>
<dbReference type="PeptideAtlas" id="P39905"/>
<dbReference type="ProteomicsDB" id="55328">
    <molecule id="P39905-1"/>
</dbReference>
<dbReference type="ProteomicsDB" id="55329">
    <molecule id="P39905-2"/>
</dbReference>
<dbReference type="ProteomicsDB" id="55330">
    <molecule id="P39905-3"/>
</dbReference>
<dbReference type="ProteomicsDB" id="55331">
    <molecule id="P39905-4"/>
</dbReference>
<dbReference type="ProteomicsDB" id="55332">
    <molecule id="P39905-5"/>
</dbReference>
<dbReference type="TopDownProteomics" id="P39905-3">
    <molecule id="P39905-3"/>
</dbReference>
<dbReference type="Antibodypedia" id="3924">
    <property type="antibodies" value="555 antibodies from 42 providers"/>
</dbReference>
<dbReference type="DNASU" id="2668"/>
<dbReference type="Ensembl" id="ENST00000326524.7">
    <molecule id="P39905-1"/>
    <property type="protein sequence ID" value="ENSP00000317145.2"/>
    <property type="gene ID" value="ENSG00000168621.15"/>
</dbReference>
<dbReference type="Ensembl" id="ENST00000344622.8">
    <molecule id="P39905-2"/>
    <property type="protein sequence ID" value="ENSP00000339703.4"/>
    <property type="gene ID" value="ENSG00000168621.15"/>
</dbReference>
<dbReference type="Ensembl" id="ENST00000381826.8">
    <molecule id="P39905-4"/>
    <property type="protein sequence ID" value="ENSP00000371248.4"/>
    <property type="gene ID" value="ENSG00000168621.15"/>
</dbReference>
<dbReference type="Ensembl" id="ENST00000427982.5">
    <molecule id="P39905-3"/>
    <property type="protein sequence ID" value="ENSP00000409007.1"/>
    <property type="gene ID" value="ENSG00000168621.15"/>
</dbReference>
<dbReference type="Ensembl" id="ENST00000515058.5">
    <molecule id="P39905-2"/>
    <property type="protein sequence ID" value="ENSP00000425928.1"/>
    <property type="gene ID" value="ENSG00000168621.15"/>
</dbReference>
<dbReference type="Ensembl" id="ENST00000620847.1">
    <molecule id="P39905-5"/>
    <property type="protein sequence ID" value="ENSP00000478722.1"/>
    <property type="gene ID" value="ENSG00000168621.15"/>
</dbReference>
<dbReference type="GeneID" id="2668"/>
<dbReference type="KEGG" id="hsa:2668"/>
<dbReference type="MANE-Select" id="ENST00000326524.7">
    <property type="protein sequence ID" value="ENSP00000317145.2"/>
    <property type="RefSeq nucleotide sequence ID" value="NM_000514.4"/>
    <property type="RefSeq protein sequence ID" value="NP_000505.1"/>
</dbReference>
<dbReference type="UCSC" id="uc011cpd.2">
    <molecule id="P39905-1"/>
    <property type="organism name" value="human"/>
</dbReference>
<dbReference type="AGR" id="HGNC:4232"/>
<dbReference type="CTD" id="2668"/>
<dbReference type="DisGeNET" id="2668"/>
<dbReference type="GeneCards" id="GDNF"/>
<dbReference type="HGNC" id="HGNC:4232">
    <property type="gene designation" value="GDNF"/>
</dbReference>
<dbReference type="HPA" id="ENSG00000168621">
    <property type="expression patterns" value="Tissue enhanced (intestine, skeletal muscle)"/>
</dbReference>
<dbReference type="MalaCards" id="GDNF"/>
<dbReference type="MIM" id="171300">
    <property type="type" value="phenotype"/>
</dbReference>
<dbReference type="MIM" id="600837">
    <property type="type" value="gene"/>
</dbReference>
<dbReference type="MIM" id="613711">
    <property type="type" value="phenotype"/>
</dbReference>
<dbReference type="neXtProt" id="NX_P39905"/>
<dbReference type="OpenTargets" id="ENSG00000168621"/>
<dbReference type="Orphanet" id="661">
    <property type="disease" value="Congenital central hypoventilation syndrome"/>
</dbReference>
<dbReference type="Orphanet" id="388">
    <property type="disease" value="Hirschsprung disease"/>
</dbReference>
<dbReference type="PharmGKB" id="PA28644"/>
<dbReference type="VEuPathDB" id="HostDB:ENSG00000168621"/>
<dbReference type="eggNOG" id="ENOG502QWCH">
    <property type="taxonomic scope" value="Eukaryota"/>
</dbReference>
<dbReference type="GeneTree" id="ENSGT00950000182993"/>
<dbReference type="HOGENOM" id="CLU_102221_1_0_1"/>
<dbReference type="InParanoid" id="P39905"/>
<dbReference type="OrthoDB" id="9950038at2759"/>
<dbReference type="PAN-GO" id="P39905">
    <property type="GO annotations" value="5 GO annotations based on evolutionary models"/>
</dbReference>
<dbReference type="PhylomeDB" id="P39905"/>
<dbReference type="TreeFam" id="TF332366"/>
<dbReference type="PathwayCommons" id="P39905"/>
<dbReference type="Reactome" id="R-HSA-419037">
    <property type="pathway name" value="NCAM1 interactions"/>
</dbReference>
<dbReference type="Reactome" id="R-HSA-5673001">
    <property type="pathway name" value="RAF/MAP kinase cascade"/>
</dbReference>
<dbReference type="Reactome" id="R-HSA-8853659">
    <property type="pathway name" value="RET signaling"/>
</dbReference>
<dbReference type="Reactome" id="R-HSA-9830674">
    <property type="pathway name" value="Formation of the ureteric bud"/>
</dbReference>
<dbReference type="SignaLink" id="P39905"/>
<dbReference type="SIGNOR" id="P39905"/>
<dbReference type="BioGRID-ORCS" id="2668">
    <property type="hits" value="15 hits in 1146 CRISPR screens"/>
</dbReference>
<dbReference type="ChiTaRS" id="GDNF">
    <property type="organism name" value="human"/>
</dbReference>
<dbReference type="EvolutionaryTrace" id="P39905"/>
<dbReference type="GeneWiki" id="Glial_cell_line-derived_neurotrophic_factor"/>
<dbReference type="GenomeRNAi" id="2668"/>
<dbReference type="Pharos" id="P39905">
    <property type="development level" value="Tbio"/>
</dbReference>
<dbReference type="PRO" id="PR:P39905"/>
<dbReference type="Proteomes" id="UP000005640">
    <property type="component" value="Chromosome 5"/>
</dbReference>
<dbReference type="RNAct" id="P39905">
    <property type="molecule type" value="protein"/>
</dbReference>
<dbReference type="Bgee" id="ENSG00000168621">
    <property type="expression patterns" value="Expressed in hindlimb stylopod muscle and 112 other cell types or tissues"/>
</dbReference>
<dbReference type="ExpressionAtlas" id="P39905">
    <property type="expression patterns" value="baseline and differential"/>
</dbReference>
<dbReference type="GO" id="GO:0005576">
    <property type="term" value="C:extracellular region"/>
    <property type="evidence" value="ECO:0000314"/>
    <property type="project" value="UniProtKB"/>
</dbReference>
<dbReference type="GO" id="GO:0005615">
    <property type="term" value="C:extracellular space"/>
    <property type="evidence" value="ECO:0000314"/>
    <property type="project" value="UniProt"/>
</dbReference>
<dbReference type="GO" id="GO:0005794">
    <property type="term" value="C:Golgi apparatus"/>
    <property type="evidence" value="ECO:0000314"/>
    <property type="project" value="UniProtKB"/>
</dbReference>
<dbReference type="GO" id="GO:1902379">
    <property type="term" value="F:chemoattractant activity involved in axon guidance"/>
    <property type="evidence" value="ECO:0000304"/>
    <property type="project" value="ARUK-UCL"/>
</dbReference>
<dbReference type="GO" id="GO:0030116">
    <property type="term" value="F:glial cell-derived neurotrophic factor receptor binding"/>
    <property type="evidence" value="ECO:0007669"/>
    <property type="project" value="InterPro"/>
</dbReference>
<dbReference type="GO" id="GO:0008083">
    <property type="term" value="F:growth factor activity"/>
    <property type="evidence" value="ECO:0000314"/>
    <property type="project" value="UniProtKB"/>
</dbReference>
<dbReference type="GO" id="GO:0042803">
    <property type="term" value="F:protein homodimerization activity"/>
    <property type="evidence" value="ECO:0000314"/>
    <property type="project" value="UniProtKB"/>
</dbReference>
<dbReference type="GO" id="GO:0030971">
    <property type="term" value="F:receptor tyrosine kinase binding"/>
    <property type="evidence" value="ECO:0007669"/>
    <property type="project" value="InterPro"/>
</dbReference>
<dbReference type="GO" id="GO:0005102">
    <property type="term" value="F:signaling receptor binding"/>
    <property type="evidence" value="ECO:0000304"/>
    <property type="project" value="ProtInc"/>
</dbReference>
<dbReference type="GO" id="GO:0008344">
    <property type="term" value="P:adult locomotory behavior"/>
    <property type="evidence" value="ECO:0000304"/>
    <property type="project" value="BHF-UCL"/>
</dbReference>
<dbReference type="GO" id="GO:0001658">
    <property type="term" value="P:branching involved in ureteric bud morphogenesis"/>
    <property type="evidence" value="ECO:0000250"/>
    <property type="project" value="UniProtKB"/>
</dbReference>
<dbReference type="GO" id="GO:0071679">
    <property type="term" value="P:commissural neuron axon guidance"/>
    <property type="evidence" value="ECO:0000250"/>
    <property type="project" value="ARUK-UCL"/>
</dbReference>
<dbReference type="GO" id="GO:0021516">
    <property type="term" value="P:dorsal spinal cord development"/>
    <property type="evidence" value="ECO:0000250"/>
    <property type="project" value="ARUK-UCL"/>
</dbReference>
<dbReference type="GO" id="GO:0048568">
    <property type="term" value="P:embryonic organ development"/>
    <property type="evidence" value="ECO:0000250"/>
    <property type="project" value="ARUK-UCL"/>
</dbReference>
<dbReference type="GO" id="GO:0048484">
    <property type="term" value="P:enteric nervous system development"/>
    <property type="evidence" value="ECO:0000250"/>
    <property type="project" value="UniProtKB"/>
</dbReference>
<dbReference type="GO" id="GO:0035860">
    <property type="term" value="P:glial cell-derived neurotrophic factor receptor signaling pathway"/>
    <property type="evidence" value="ECO:0000314"/>
    <property type="project" value="UniProtKB"/>
</dbReference>
<dbReference type="GO" id="GO:0003337">
    <property type="term" value="P:mesenchymal to epithelial transition involved in metanephros morphogenesis"/>
    <property type="evidence" value="ECO:0007669"/>
    <property type="project" value="Ensembl"/>
</dbReference>
<dbReference type="GO" id="GO:0001656">
    <property type="term" value="P:metanephros development"/>
    <property type="evidence" value="ECO:0000250"/>
    <property type="project" value="UniProtKB"/>
</dbReference>
<dbReference type="GO" id="GO:0048255">
    <property type="term" value="P:mRNA stabilization"/>
    <property type="evidence" value="ECO:0000314"/>
    <property type="project" value="BHF-UCL"/>
</dbReference>
<dbReference type="GO" id="GO:0043066">
    <property type="term" value="P:negative regulation of apoptotic process"/>
    <property type="evidence" value="ECO:0000304"/>
    <property type="project" value="ProtInc"/>
</dbReference>
<dbReference type="GO" id="GO:2001240">
    <property type="term" value="P:negative regulation of extrinsic apoptotic signaling pathway in absence of ligand"/>
    <property type="evidence" value="ECO:0000314"/>
    <property type="project" value="UniProtKB"/>
</dbReference>
<dbReference type="GO" id="GO:0043524">
    <property type="term" value="P:negative regulation of neuron apoptotic process"/>
    <property type="evidence" value="ECO:0000314"/>
    <property type="project" value="UniProtKB"/>
</dbReference>
<dbReference type="GO" id="GO:0007399">
    <property type="term" value="P:nervous system development"/>
    <property type="evidence" value="ECO:0000304"/>
    <property type="project" value="ARUK-UCL"/>
</dbReference>
<dbReference type="GO" id="GO:0001755">
    <property type="term" value="P:neural crest cell migration"/>
    <property type="evidence" value="ECO:0000314"/>
    <property type="project" value="MGI"/>
</dbReference>
<dbReference type="GO" id="GO:0031175">
    <property type="term" value="P:neuron projection development"/>
    <property type="evidence" value="ECO:0000314"/>
    <property type="project" value="MGI"/>
</dbReference>
<dbReference type="GO" id="GO:0001759">
    <property type="term" value="P:organ induction"/>
    <property type="evidence" value="ECO:0007669"/>
    <property type="project" value="Ensembl"/>
</dbReference>
<dbReference type="GO" id="GO:0007422">
    <property type="term" value="P:peripheral nervous system development"/>
    <property type="evidence" value="ECO:0000318"/>
    <property type="project" value="GO_Central"/>
</dbReference>
<dbReference type="GO" id="GO:0030432">
    <property type="term" value="P:peristalsis"/>
    <property type="evidence" value="ECO:0000250"/>
    <property type="project" value="UniProtKB"/>
</dbReference>
<dbReference type="GO" id="GO:0090190">
    <property type="term" value="P:positive regulation of branching involved in ureteric bud morphogenesis"/>
    <property type="evidence" value="ECO:0000314"/>
    <property type="project" value="UniProtKB"/>
</dbReference>
<dbReference type="GO" id="GO:0045597">
    <property type="term" value="P:positive regulation of cell differentiation"/>
    <property type="evidence" value="ECO:0000316"/>
    <property type="project" value="MGI"/>
</dbReference>
<dbReference type="GO" id="GO:0008284">
    <property type="term" value="P:positive regulation of cell population proliferation"/>
    <property type="evidence" value="ECO:0000314"/>
    <property type="project" value="MGI"/>
</dbReference>
<dbReference type="GO" id="GO:0033603">
    <property type="term" value="P:positive regulation of dopamine secretion"/>
    <property type="evidence" value="ECO:0000304"/>
    <property type="project" value="BHF-UCL"/>
</dbReference>
<dbReference type="GO" id="GO:0072108">
    <property type="term" value="P:positive regulation of mesenchymal to epithelial transition involved in metanephros morphogenesis"/>
    <property type="evidence" value="ECO:0007669"/>
    <property type="project" value="Ensembl"/>
</dbReference>
<dbReference type="GO" id="GO:0045944">
    <property type="term" value="P:positive regulation of transcription by RNA polymerase II"/>
    <property type="evidence" value="ECO:0000314"/>
    <property type="project" value="BHF-UCL"/>
</dbReference>
<dbReference type="GO" id="GO:0072107">
    <property type="term" value="P:positive regulation of ureteric bud formation"/>
    <property type="evidence" value="ECO:0000314"/>
    <property type="project" value="UniProtKB"/>
</dbReference>
<dbReference type="GO" id="GO:0021784">
    <property type="term" value="P:postganglionic parasympathetic fiber development"/>
    <property type="evidence" value="ECO:0000250"/>
    <property type="project" value="UniProtKB"/>
</dbReference>
<dbReference type="GO" id="GO:0001941">
    <property type="term" value="P:postsynaptic membrane organization"/>
    <property type="evidence" value="ECO:0007669"/>
    <property type="project" value="Ensembl"/>
</dbReference>
<dbReference type="GO" id="GO:0051584">
    <property type="term" value="P:regulation of dopamine uptake involved in synaptic transmission"/>
    <property type="evidence" value="ECO:0000314"/>
    <property type="project" value="UniProtKB"/>
</dbReference>
<dbReference type="GO" id="GO:0010468">
    <property type="term" value="P:regulation of gene expression"/>
    <property type="evidence" value="ECO:0000316"/>
    <property type="project" value="MGI"/>
</dbReference>
<dbReference type="GO" id="GO:0060688">
    <property type="term" value="P:regulation of morphogenesis of a branching structure"/>
    <property type="evidence" value="ECO:0000250"/>
    <property type="project" value="UniProtKB"/>
</dbReference>
<dbReference type="GO" id="GO:2001260">
    <property type="term" value="P:regulation of semaphorin-plexin signaling pathway"/>
    <property type="evidence" value="ECO:0000250"/>
    <property type="project" value="ARUK-UCL"/>
</dbReference>
<dbReference type="GO" id="GO:2000736">
    <property type="term" value="P:regulation of stem cell differentiation"/>
    <property type="evidence" value="ECO:0000304"/>
    <property type="project" value="ParkinsonsUK-UCL"/>
</dbReference>
<dbReference type="GO" id="GO:0007165">
    <property type="term" value="P:signal transduction"/>
    <property type="evidence" value="ECO:0000304"/>
    <property type="project" value="ProtInc"/>
</dbReference>
<dbReference type="GO" id="GO:0048485">
    <property type="term" value="P:sympathetic nervous system development"/>
    <property type="evidence" value="ECO:0000250"/>
    <property type="project" value="UniProtKB"/>
</dbReference>
<dbReference type="GO" id="GO:0060676">
    <property type="term" value="P:ureteric bud formation"/>
    <property type="evidence" value="ECO:0007669"/>
    <property type="project" value="Ensembl"/>
</dbReference>
<dbReference type="CDD" id="cd19380">
    <property type="entry name" value="TGF_beta_GDNF"/>
    <property type="match status" value="1"/>
</dbReference>
<dbReference type="DisProt" id="DP02574"/>
<dbReference type="FunFam" id="2.10.90.10:FF:000015">
    <property type="entry name" value="Glial cell line-derived neurotrophic factor"/>
    <property type="match status" value="1"/>
</dbReference>
<dbReference type="Gene3D" id="2.10.90.10">
    <property type="entry name" value="Cystine-knot cytokines"/>
    <property type="match status" value="1"/>
</dbReference>
<dbReference type="InterPro" id="IPR029034">
    <property type="entry name" value="Cystine-knot_cytokine"/>
</dbReference>
<dbReference type="InterPro" id="IPR016649">
    <property type="entry name" value="GDNF"/>
</dbReference>
<dbReference type="InterPro" id="IPR043401">
    <property type="entry name" value="GDNF_fam"/>
</dbReference>
<dbReference type="InterPro" id="IPR047020">
    <property type="entry name" value="GDNF_TGF-b-like"/>
</dbReference>
<dbReference type="InterPro" id="IPR001839">
    <property type="entry name" value="TGF-b_C"/>
</dbReference>
<dbReference type="PANTHER" id="PTHR12173">
    <property type="entry name" value="GDNF SUBFAMILY OF TGF-BETA FAMILY"/>
    <property type="match status" value="1"/>
</dbReference>
<dbReference type="PANTHER" id="PTHR12173:SF1">
    <property type="entry name" value="GLIAL CELL LINE-DERIVED NEUROTROPHIC FACTOR"/>
    <property type="match status" value="1"/>
</dbReference>
<dbReference type="Pfam" id="PF00019">
    <property type="entry name" value="TGF_beta"/>
    <property type="match status" value="1"/>
</dbReference>
<dbReference type="PIRSF" id="PIRSF016238">
    <property type="entry name" value="GDNF"/>
    <property type="match status" value="1"/>
</dbReference>
<dbReference type="SMART" id="SM00204">
    <property type="entry name" value="TGFB"/>
    <property type="match status" value="1"/>
</dbReference>
<dbReference type="SUPFAM" id="SSF57501">
    <property type="entry name" value="Cystine-knot cytokines"/>
    <property type="match status" value="1"/>
</dbReference>
<dbReference type="PROSITE" id="PS51362">
    <property type="entry name" value="TGF_BETA_2"/>
    <property type="match status" value="1"/>
</dbReference>
<reference key="1">
    <citation type="journal article" date="1993" name="Science">
        <title>GDNF: a glial cell line-derived neurotrophic factor for midbrain dopaminergic neurons.</title>
        <authorList>
            <person name="Lin L.-F.H."/>
            <person name="Doherty D.H."/>
            <person name="Lile J.D."/>
            <person name="Bektesh S."/>
            <person name="Collins F."/>
        </authorList>
    </citation>
    <scope>NUCLEOTIDE SEQUENCE [GENOMIC DNA]</scope>
    <scope>FUNCTION</scope>
    <scope>HOMODIMERIZATION</scope>
    <scope>DISULFIDE BONDS</scope>
</reference>
<reference key="2">
    <citation type="journal article" date="1994" name="Exp. Neurol.">
        <title>Multiple astrocyte transcripts encode nigral trophic factors in rat and human.</title>
        <authorList>
            <person name="Schaar D.G."/>
            <person name="Sieber B.-A."/>
            <person name="Sherwood A.C."/>
            <person name="Dean D."/>
            <person name="Mendoza G."/>
            <person name="Ramakrishnan L."/>
            <person name="Dreyfus C.F."/>
            <person name="Black I.B."/>
        </authorList>
    </citation>
    <scope>NUCLEOTIDE SEQUENCE [MRNA] (ISOFORMS 1 AND 2)</scope>
    <scope>TISSUE SPECIFICITY</scope>
</reference>
<reference key="3">
    <citation type="submission" date="2001-08" db="EMBL/GenBank/DDBJ databases">
        <authorList>
            <person name="Zhang B."/>
            <person name="Feng Z."/>
            <person name="Zhou Y."/>
            <person name="Peng X."/>
            <person name="Yuan J."/>
            <person name="Qiang B."/>
        </authorList>
    </citation>
    <scope>NUCLEOTIDE SEQUENCE [MRNA] (ISOFORM 2)</scope>
</reference>
<reference key="4">
    <citation type="submission" date="2004-06" db="EMBL/GenBank/DDBJ databases">
        <title>Cloning of human full open reading frames in Gateway(TM) system entry vector (pDONR201).</title>
        <authorList>
            <person name="Ebert L."/>
            <person name="Schick M."/>
            <person name="Neubert P."/>
            <person name="Schatten R."/>
            <person name="Henze S."/>
            <person name="Korn B."/>
        </authorList>
    </citation>
    <scope>NUCLEOTIDE SEQUENCE [LARGE SCALE MRNA] (ISOFORM 1)</scope>
</reference>
<reference key="5">
    <citation type="journal article" date="2004" name="Nature">
        <title>The DNA sequence and comparative analysis of human chromosome 5.</title>
        <authorList>
            <person name="Schmutz J."/>
            <person name="Martin J."/>
            <person name="Terry A."/>
            <person name="Couronne O."/>
            <person name="Grimwood J."/>
            <person name="Lowry S."/>
            <person name="Gordon L.A."/>
            <person name="Scott D."/>
            <person name="Xie G."/>
            <person name="Huang W."/>
            <person name="Hellsten U."/>
            <person name="Tran-Gyamfi M."/>
            <person name="She X."/>
            <person name="Prabhakar S."/>
            <person name="Aerts A."/>
            <person name="Altherr M."/>
            <person name="Bajorek E."/>
            <person name="Black S."/>
            <person name="Branscomb E."/>
            <person name="Caoile C."/>
            <person name="Challacombe J.F."/>
            <person name="Chan Y.M."/>
            <person name="Denys M."/>
            <person name="Detter J.C."/>
            <person name="Escobar J."/>
            <person name="Flowers D."/>
            <person name="Fotopulos D."/>
            <person name="Glavina T."/>
            <person name="Gomez M."/>
            <person name="Gonzales E."/>
            <person name="Goodstein D."/>
            <person name="Grigoriev I."/>
            <person name="Groza M."/>
            <person name="Hammon N."/>
            <person name="Hawkins T."/>
            <person name="Haydu L."/>
            <person name="Israni S."/>
            <person name="Jett J."/>
            <person name="Kadner K."/>
            <person name="Kimball H."/>
            <person name="Kobayashi A."/>
            <person name="Lopez F."/>
            <person name="Lou Y."/>
            <person name="Martinez D."/>
            <person name="Medina C."/>
            <person name="Morgan J."/>
            <person name="Nandkeshwar R."/>
            <person name="Noonan J.P."/>
            <person name="Pitluck S."/>
            <person name="Pollard M."/>
            <person name="Predki P."/>
            <person name="Priest J."/>
            <person name="Ramirez L."/>
            <person name="Retterer J."/>
            <person name="Rodriguez A."/>
            <person name="Rogers S."/>
            <person name="Salamov A."/>
            <person name="Salazar A."/>
            <person name="Thayer N."/>
            <person name="Tice H."/>
            <person name="Tsai M."/>
            <person name="Ustaszewska A."/>
            <person name="Vo N."/>
            <person name="Wheeler J."/>
            <person name="Wu K."/>
            <person name="Yang J."/>
            <person name="Dickson M."/>
            <person name="Cheng J.-F."/>
            <person name="Eichler E.E."/>
            <person name="Olsen A."/>
            <person name="Pennacchio L.A."/>
            <person name="Rokhsar D.S."/>
            <person name="Richardson P."/>
            <person name="Lucas S.M."/>
            <person name="Myers R.M."/>
            <person name="Rubin E.M."/>
        </authorList>
    </citation>
    <scope>NUCLEOTIDE SEQUENCE [LARGE SCALE GENOMIC DNA]</scope>
</reference>
<reference key="6">
    <citation type="submission" date="2005-07" db="EMBL/GenBank/DDBJ databases">
        <authorList>
            <person name="Mural R.J."/>
            <person name="Istrail S."/>
            <person name="Sutton G.G."/>
            <person name="Florea L."/>
            <person name="Halpern A.L."/>
            <person name="Mobarry C.M."/>
            <person name="Lippert R."/>
            <person name="Walenz B."/>
            <person name="Shatkay H."/>
            <person name="Dew I."/>
            <person name="Miller J.R."/>
            <person name="Flanigan M.J."/>
            <person name="Edwards N.J."/>
            <person name="Bolanos R."/>
            <person name="Fasulo D."/>
            <person name="Halldorsson B.V."/>
            <person name="Hannenhalli S."/>
            <person name="Turner R."/>
            <person name="Yooseph S."/>
            <person name="Lu F."/>
            <person name="Nusskern D.R."/>
            <person name="Shue B.C."/>
            <person name="Zheng X.H."/>
            <person name="Zhong F."/>
            <person name="Delcher A.L."/>
            <person name="Huson D.H."/>
            <person name="Kravitz S.A."/>
            <person name="Mouchard L."/>
            <person name="Reinert K."/>
            <person name="Remington K.A."/>
            <person name="Clark A.G."/>
            <person name="Waterman M.S."/>
            <person name="Eichler E.E."/>
            <person name="Adams M.D."/>
            <person name="Hunkapiller M.W."/>
            <person name="Myers E.W."/>
            <person name="Venter J.C."/>
        </authorList>
    </citation>
    <scope>NUCLEOTIDE SEQUENCE [LARGE SCALE GENOMIC DNA]</scope>
</reference>
<reference key="7">
    <citation type="journal article" date="2004" name="Genome Res.">
        <title>The status, quality, and expansion of the NIH full-length cDNA project: the Mammalian Gene Collection (MGC).</title>
        <authorList>
            <consortium name="The MGC Project Team"/>
        </authorList>
    </citation>
    <scope>NUCLEOTIDE SEQUENCE [LARGE SCALE MRNA] (ISOFORM 1)</scope>
</reference>
<reference key="8">
    <citation type="journal article" date="1999" name="Brain Res. Mol. Brain Res.">
        <title>Characterization of a promoter for the human glial cell line-derived neurotrophic factor gene.</title>
        <authorList>
            <person name="Baecker P.A."/>
            <person name="Lee W.H."/>
            <person name="Verity A.N."/>
            <person name="Eglen R.M."/>
            <person name="Johnson R.M."/>
        </authorList>
    </citation>
    <scope>NUCLEOTIDE SEQUENCE [MRNA] OF 1-187 (ISOFORM 1)</scope>
    <source>
        <tissue>Fetal kidney</tissue>
    </source>
</reference>
<reference key="9">
    <citation type="submission" date="1997-10" db="EMBL/GenBank/DDBJ databases">
        <title>The human GDNF gene promoter.</title>
        <authorList>
            <person name="Suter-Crazzolara C."/>
            <person name="Baecker P.A."/>
            <person name="Lee W.H."/>
            <person name="Johnson R.M."/>
            <person name="Unsicker K."/>
        </authorList>
    </citation>
    <scope>NUCLEOTIDE SEQUENCE [MRNA] OF 1-88 (ISOFORM 2)</scope>
    <scope>NUCLEOTIDE SEQUENCE [GENOMIC DNA] OF 1-77</scope>
    <scope>NUCLEOTIDE SEQUENCE [MRNA] OF 1-59 (ISOFORMS 3 AND 4)</scope>
    <source>
        <tissue>Brain</tissue>
        <tissue>Kidney</tissue>
    </source>
</reference>
<reference key="10">
    <citation type="journal article" date="1998" name="Hum. Mol. Genet.">
        <title>Analysis of the human GDNF gene reveals an inducible promoter, three exons, a triplet repeat within the 3'-UTR and alternative splice products.</title>
        <authorList>
            <person name="Grimm L."/>
            <person name="Holinski-Feder E."/>
            <person name="Teodoridis J."/>
            <person name="Scheffer B."/>
            <person name="Schindelhauer D."/>
            <person name="Meitinger T."/>
            <person name="Ueffing M."/>
        </authorList>
    </citation>
    <scope>NUCLEOTIDE SEQUENCE [GENOMIC DNA] OF 1-50</scope>
    <scope>SUBCELLULAR LOCATION</scope>
    <scope>INDUCTION</scope>
</reference>
<reference key="11">
    <citation type="journal article" date="1996" name="Biochemistry">
        <title>Glial cell line-derived neurotrophic factor: selective reduction of the intermolecular disulfide linkage and characterization of its disulfide structure.</title>
        <authorList>
            <person name="Haniu M."/>
            <person name="Hui J."/>
            <person name="Young Y."/>
            <person name="Le J."/>
            <person name="Katta V."/>
            <person name="Lee R."/>
            <person name="Shimamoto G."/>
            <person name="Rohde M.F."/>
        </authorList>
    </citation>
    <scope>PROTEIN SEQUENCE OF 87-122; 141-153; 173-184 AND 196-211</scope>
    <scope>HOMODIMERIZATION</scope>
    <scope>DISULFIDE BONDS</scope>
</reference>
<reference key="12">
    <citation type="journal article" date="1997" name="Hum. Mol. Genet.">
        <title>Genetic predisposition to phaeochromocytoma: analysis of candidate genes GDNF, RET and VHL.</title>
        <authorList>
            <person name="Woodward E.R."/>
            <person name="Eng C."/>
            <person name="McMahon R."/>
            <person name="Voutilainen R."/>
            <person name="Affara N.A."/>
            <person name="Ponder B.A."/>
            <person name="Maher E.R."/>
        </authorList>
    </citation>
    <scope>POSSIBLE INVOLVEMENT IN PCC</scope>
    <scope>VARIANT TRP-93</scope>
</reference>
<reference key="13">
    <citation type="journal article" date="2000" name="J. Biol. Chem.">
        <title>Binding of GDNF and neurturin to human GDNF family receptor alpha 1 and 2. Influence of cRET and cooperative interactions.</title>
        <authorList>
            <person name="Cik M."/>
            <person name="Masure S."/>
            <person name="Lesage A.S."/>
            <person name="Van Der Linden I."/>
            <person name="Van Gompel P."/>
            <person name="Pangalos M.N."/>
            <person name="Gordon R.D."/>
            <person name="Leysen J.E."/>
        </authorList>
    </citation>
    <scope>FUNCTION</scope>
</reference>
<reference key="14">
    <citation type="journal article" date="2004" name="Dev. Biol.">
        <title>Neural cells in the esophagus respond to glial cell line-derived neurotrophic factor and neurturin, and are RET-dependent.</title>
        <authorList>
            <person name="Yan H."/>
            <person name="Bergner A.J."/>
            <person name="Enomoto H."/>
            <person name="Milbrandt J."/>
            <person name="Newgreen D.F."/>
            <person name="Young H.M."/>
        </authorList>
    </citation>
    <scope>FUNCTION</scope>
</reference>
<reference key="15">
    <citation type="journal article" date="2004" name="J. Biol. Chem.">
        <title>Functional organization of the sortilin Vps10p domain.</title>
        <authorList>
            <person name="Westergaard U.B."/>
            <person name="Soerensen E.S."/>
            <person name="Hermey G."/>
            <person name="Nielsen M.S."/>
            <person name="Nykjaer A."/>
            <person name="Kirkegaard K."/>
            <person name="Jacobsen C."/>
            <person name="Gliemann J."/>
            <person name="Madsen P."/>
            <person name="Petersen C.M."/>
        </authorList>
    </citation>
    <scope>INTERACTION WITH SORL1</scope>
</reference>
<reference key="16">
    <citation type="journal article" date="2011" name="J. Biol. Chem.">
        <title>Sorting protein-related receptor SorLA controls regulated secretion of glial cell line-derived neurotrophic factor.</title>
        <authorList>
            <person name="Geng Z."/>
            <person name="Xu F.Y."/>
            <person name="Huang S.H."/>
            <person name="Chen Z.Y."/>
        </authorList>
    </citation>
    <scope>INTERACTION WITH SORL1 AND RET</scope>
    <scope>SUBCELLULAR LOCATION</scope>
</reference>
<reference key="17">
    <citation type="journal article" date="2011" name="J. Biol. Chem.">
        <title>Identification of novel GDNF isoforms and cis-antisense GDNFOS gene and their regulation in human middle temporal gyrus of Alzheimer disease.</title>
        <authorList>
            <person name="Airavaara M."/>
            <person name="Pletnikova O."/>
            <person name="Doyle M.E."/>
            <person name="Zhang Y.E."/>
            <person name="Troncoso J.C."/>
            <person name="Liu Q.R."/>
        </authorList>
    </citation>
    <scope>ALTERNATIVE SPLICING (ISOFORMS 1; 2; 3 AND 5)</scope>
    <scope>TISSUE SPECIFICITY</scope>
</reference>
<reference key="18">
    <citation type="journal article" date="1997" name="Eur. J. Hum. Genet.">
        <title>Mutations in Hirschsprung disease: when does a mutation contribute to the phenotype.</title>
        <authorList>
            <person name="Hofstra R.M.W."/>
            <person name="Osinga J."/>
            <person name="Buys C.H.C.M."/>
        </authorList>
    </citation>
    <scope>REVIEW ON VARIANTS</scope>
</reference>
<reference key="19">
    <citation type="journal article" date="2013" name="Cell Rep.">
        <title>SorLA controls neurotrophic activity by sorting of GDNF and its receptors GFRalpha1 and RET.</title>
        <authorList>
            <person name="Glerup S."/>
            <person name="Lume M."/>
            <person name="Olsen D."/>
            <person name="Nyengaard J.R."/>
            <person name="Vaegter C.B."/>
            <person name="Gustafsen C."/>
            <person name="Christensen E.I."/>
            <person name="Kjolby M."/>
            <person name="Hay-Schmidt A."/>
            <person name="Bender D."/>
            <person name="Madsen P."/>
            <person name="Saarma M."/>
            <person name="Nykjaer A."/>
            <person name="Petersen C.M."/>
        </authorList>
    </citation>
    <scope>INTERACTION WITH SORL1</scope>
</reference>
<reference key="20">
    <citation type="journal article" date="2009" name="Acta Crystallogr. F">
        <title>Comparison of GFL-GFRalpha complexes: further evidence relating GFL bend angle to RET signalling.</title>
        <authorList>
            <person name="Parkash V."/>
            <person name="Goldman A."/>
        </authorList>
    </citation>
    <scope>X-RAY CRYSTALLOGRAPHY (2.35 ANGSTROMS) OF 78-211</scope>
    <scope>GLYCOSYLATION AT ASN-126</scope>
    <scope>DISULFIDE BONDS</scope>
</reference>
<reference evidence="28" key="21">
    <citation type="journal article" date="2014" name="Cell Rep.">
        <title>RET recognition of GDNF-GFRalpha1 ligand by a composite binding site promotes membrane-proximal self-association.</title>
        <authorList>
            <person name="Goodman K.M."/>
            <person name="Kjaer S."/>
            <person name="Beuron F."/>
            <person name="Knowles P.P."/>
            <person name="Nawrotek A."/>
            <person name="Burns E.M."/>
            <person name="Purkiss A.G."/>
            <person name="George R."/>
            <person name="Santoro M."/>
            <person name="Morris E.P."/>
            <person name="McDonald N.Q."/>
        </authorList>
    </citation>
    <scope>STRUCTURE BY ELECTRON MICROSCOPY (24.00 ANGSTROMS) OF 78-211 IN COMPLEX WITH RET AND GFRA1 AND RET</scope>
    <scope>DISULFIDE BONDS</scope>
    <scope>FUNCTION</scope>
    <scope>SUBUNIT</scope>
    <scope>GLYCOSYLATION AT ASN-126</scope>
</reference>
<reference evidence="29" key="22">
    <citation type="journal article" date="2019" name="Elife">
        <title>Cryo-EM analyses reveal the common mechanism and diversification in the activation of RET by different ligands.</title>
        <authorList>
            <person name="Li J."/>
            <person name="Shang G."/>
            <person name="Chen Y.J."/>
            <person name="Brautigam C.A."/>
            <person name="Liou J."/>
            <person name="Zhang X."/>
            <person name="Bai X.C."/>
        </authorList>
    </citation>
    <scope>STRUCTURE BY ELECTRON MICROSCOPY (4.40 ANGSTROMS) OF 78-211 IN COMPLEX WITH RET AND GFRA1</scope>
    <scope>FUNCTION</scope>
    <scope>DISULFIDE BOND</scope>
    <scope>SUBUNIT</scope>
</reference>
<reference key="23">
    <citation type="journal article" date="1996" name="Hum. Mol. Genet.">
        <title>De novo mutation of GDNF, ligand for the RET/GDNFR-alpha receptor complex, in Hirschsprung disease.</title>
        <authorList>
            <person name="Ivanchuk S.M."/>
            <person name="Myers S.M."/>
            <person name="Eng C."/>
            <person name="Mulligan L.M."/>
        </authorList>
    </citation>
    <scope>VARIANT HSCR3 SER-154</scope>
</reference>
<reference key="24">
    <citation type="journal article" date="1996" name="Nat. Genet.">
        <title>Germline mutations in glial cell line-derived neurotrophic factor (GDNF) and RET in a Hirschsprung disease patient.</title>
        <authorList>
            <person name="Angrist M."/>
            <person name="Bolk S."/>
            <person name="Halushka M."/>
            <person name="Lapchak P.A."/>
            <person name="Chakravarti A."/>
        </authorList>
    </citation>
    <scope>VARIANT TRP-93</scope>
</reference>
<reference key="25">
    <citation type="journal article" date="1996" name="Nat. Genet.">
        <title>Germline mutations of the RET ligand GDNF are not sufficient to cause Hirschsprung disease.</title>
        <authorList>
            <person name="Salomon R."/>
            <person name="Attie T."/>
            <person name="Pelet A."/>
            <person name="Bidaud C."/>
            <person name="Eng C."/>
            <person name="Amiel J."/>
            <person name="Sarnacki S."/>
            <person name="Goulet O."/>
            <person name="Ricour C."/>
            <person name="Nihoul-Fekete C."/>
            <person name="Munnich A."/>
            <person name="Lyonnet S."/>
        </authorList>
    </citation>
    <scope>VARIANT HSCR3 SER-21</scope>
    <scope>VARIANT ASN-150</scope>
</reference>
<reference key="26">
    <citation type="journal article" date="1998" name="Am. J. Hum. Genet.">
        <title>Mutations of the RET-GDNF signaling pathway in Ondine's curse.</title>
        <authorList>
            <person name="Amiel J."/>
            <person name="Salomon R."/>
            <person name="Attie T."/>
            <person name="Pelet A."/>
            <person name="Trang H."/>
            <person name="Mokhtari M."/>
            <person name="Gaultier C."/>
            <person name="Munnich A."/>
            <person name="Lyonnet S."/>
        </authorList>
    </citation>
    <scope>VARIANT TRP-93</scope>
</reference>
<reference key="27">
    <citation type="journal article" date="2000" name="J. Pediatr. Surg.">
        <title>Pathogenesis of Hirschsprung's disease.</title>
        <authorList>
            <person name="Martucciello G."/>
            <person name="Ceccherini I."/>
            <person name="Lerone M."/>
            <person name="Jasonni V."/>
        </authorList>
    </citation>
    <scope>VARIANT HSCR3 MET-211</scope>
</reference>
<accession>P39905</accession>
<accession>B7WPK7</accession>
<accession>O95448</accession>
<accession>O95449</accession>
<accession>O95986</accession>
<accession>Q6FH33</accession>
<accession>Q96L44</accession>
<accession>Q9UD32</accession>
<accession>Q9UD33</accession>
<accession>Q9UMV2</accession>
<accession>Q9UP67</accession>
<accession>Q9UP97</accession>
<keyword id="KW-0002">3D-structure</keyword>
<keyword id="KW-0025">Alternative splicing</keyword>
<keyword id="KW-0165">Cleavage on pair of basic residues</keyword>
<keyword id="KW-0903">Direct protein sequencing</keyword>
<keyword id="KW-0225">Disease variant</keyword>
<keyword id="KW-1015">Disulfide bond</keyword>
<keyword id="KW-0325">Glycoprotein</keyword>
<keyword id="KW-0339">Growth factor</keyword>
<keyword id="KW-0367">Hirschsprung disease</keyword>
<keyword id="KW-1185">Reference proteome</keyword>
<keyword id="KW-0964">Secreted</keyword>
<keyword id="KW-0732">Signal</keyword>
<evidence type="ECO:0000250" key="1">
    <source>
        <dbReference type="UniProtKB" id="Q07731"/>
    </source>
</evidence>
<evidence type="ECO:0000255" key="2"/>
<evidence type="ECO:0000256" key="3">
    <source>
        <dbReference type="SAM" id="MobiDB-lite"/>
    </source>
</evidence>
<evidence type="ECO:0000269" key="4">
    <source>
    </source>
</evidence>
<evidence type="ECO:0000269" key="5">
    <source>
    </source>
</evidence>
<evidence type="ECO:0000269" key="6">
    <source>
    </source>
</evidence>
<evidence type="ECO:0000269" key="7">
    <source>
    </source>
</evidence>
<evidence type="ECO:0000269" key="8">
    <source>
    </source>
</evidence>
<evidence type="ECO:0000269" key="9">
    <source>
    </source>
</evidence>
<evidence type="ECO:0000269" key="10">
    <source>
    </source>
</evidence>
<evidence type="ECO:0000269" key="11">
    <source>
    </source>
</evidence>
<evidence type="ECO:0000269" key="12">
    <source>
    </source>
</evidence>
<evidence type="ECO:0000269" key="13">
    <source>
    </source>
</evidence>
<evidence type="ECO:0000269" key="14">
    <source>
    </source>
</evidence>
<evidence type="ECO:0000269" key="15">
    <source>
    </source>
</evidence>
<evidence type="ECO:0000269" key="16">
    <source>
    </source>
</evidence>
<evidence type="ECO:0000269" key="17">
    <source>
    </source>
</evidence>
<evidence type="ECO:0000269" key="18">
    <source>
    </source>
</evidence>
<evidence type="ECO:0000269" key="19">
    <source>
    </source>
</evidence>
<evidence type="ECO:0000269" key="20">
    <source>
    </source>
</evidence>
<evidence type="ECO:0000269" key="21">
    <source>
    </source>
</evidence>
<evidence type="ECO:0000269" key="22">
    <source>
    </source>
</evidence>
<evidence type="ECO:0000303" key="23">
    <source>
    </source>
</evidence>
<evidence type="ECO:0000303" key="24">
    <source>
    </source>
</evidence>
<evidence type="ECO:0000303" key="25">
    <source ref="3"/>
</evidence>
<evidence type="ECO:0000303" key="26">
    <source ref="9"/>
</evidence>
<evidence type="ECO:0000305" key="27"/>
<evidence type="ECO:0007744" key="28">
    <source>
        <dbReference type="PDB" id="4UX8"/>
    </source>
</evidence>
<evidence type="ECO:0007744" key="29">
    <source>
        <dbReference type="PDB" id="6Q2N"/>
    </source>
</evidence>
<evidence type="ECO:0007829" key="30">
    <source>
        <dbReference type="PDB" id="2V5E"/>
    </source>
</evidence>
<gene>
    <name type="primary">GDNF</name>
</gene>
<organism>
    <name type="scientific">Homo sapiens</name>
    <name type="common">Human</name>
    <dbReference type="NCBI Taxonomy" id="9606"/>
    <lineage>
        <taxon>Eukaryota</taxon>
        <taxon>Metazoa</taxon>
        <taxon>Chordata</taxon>
        <taxon>Craniata</taxon>
        <taxon>Vertebrata</taxon>
        <taxon>Euteleostomi</taxon>
        <taxon>Mammalia</taxon>
        <taxon>Eutheria</taxon>
        <taxon>Euarchontoglires</taxon>
        <taxon>Primates</taxon>
        <taxon>Haplorrhini</taxon>
        <taxon>Catarrhini</taxon>
        <taxon>Hominidae</taxon>
        <taxon>Homo</taxon>
    </lineage>
</organism>
<name>GDNF_HUMAN</name>